<dbReference type="EMBL" id="CU234118">
    <property type="protein sequence ID" value="CAL74270.1"/>
    <property type="molecule type" value="Genomic_DNA"/>
</dbReference>
<dbReference type="RefSeq" id="WP_011923553.1">
    <property type="nucleotide sequence ID" value="NC_009445.1"/>
</dbReference>
<dbReference type="SMR" id="A4YK44"/>
<dbReference type="STRING" id="114615.BRADO0313"/>
<dbReference type="KEGG" id="bra:BRADO0313"/>
<dbReference type="eggNOG" id="COG2835">
    <property type="taxonomic scope" value="Bacteria"/>
</dbReference>
<dbReference type="HOGENOM" id="CLU_155659_2_2_5"/>
<dbReference type="OrthoDB" id="9812205at2"/>
<dbReference type="Proteomes" id="UP000001994">
    <property type="component" value="Chromosome"/>
</dbReference>
<dbReference type="GO" id="GO:0005829">
    <property type="term" value="C:cytosol"/>
    <property type="evidence" value="ECO:0007669"/>
    <property type="project" value="TreeGrafter"/>
</dbReference>
<dbReference type="FunFam" id="2.20.25.10:FF:000002">
    <property type="entry name" value="UPF0434 protein YcaR"/>
    <property type="match status" value="1"/>
</dbReference>
<dbReference type="Gene3D" id="2.20.25.10">
    <property type="match status" value="1"/>
</dbReference>
<dbReference type="HAMAP" id="MF_01187">
    <property type="entry name" value="UPF0434"/>
    <property type="match status" value="1"/>
</dbReference>
<dbReference type="InterPro" id="IPR005651">
    <property type="entry name" value="Trm112-like"/>
</dbReference>
<dbReference type="PANTHER" id="PTHR33505:SF4">
    <property type="entry name" value="PROTEIN PREY, MITOCHONDRIAL"/>
    <property type="match status" value="1"/>
</dbReference>
<dbReference type="PANTHER" id="PTHR33505">
    <property type="entry name" value="ZGC:162634"/>
    <property type="match status" value="1"/>
</dbReference>
<dbReference type="Pfam" id="PF03966">
    <property type="entry name" value="Trm112p"/>
    <property type="match status" value="1"/>
</dbReference>
<dbReference type="SUPFAM" id="SSF158997">
    <property type="entry name" value="Trm112p-like"/>
    <property type="match status" value="1"/>
</dbReference>
<protein>
    <recommendedName>
        <fullName evidence="1">UPF0434 protein BRADO0313</fullName>
    </recommendedName>
</protein>
<accession>A4YK44</accession>
<keyword id="KW-1185">Reference proteome</keyword>
<reference key="1">
    <citation type="journal article" date="2007" name="Science">
        <title>Legumes symbioses: absence of nod genes in photosynthetic bradyrhizobia.</title>
        <authorList>
            <person name="Giraud E."/>
            <person name="Moulin L."/>
            <person name="Vallenet D."/>
            <person name="Barbe V."/>
            <person name="Cytryn E."/>
            <person name="Avarre J.-C."/>
            <person name="Jaubert M."/>
            <person name="Simon D."/>
            <person name="Cartieaux F."/>
            <person name="Prin Y."/>
            <person name="Bena G."/>
            <person name="Hannibal L."/>
            <person name="Fardoux J."/>
            <person name="Kojadinovic M."/>
            <person name="Vuillet L."/>
            <person name="Lajus A."/>
            <person name="Cruveiller S."/>
            <person name="Rouy Z."/>
            <person name="Mangenot S."/>
            <person name="Segurens B."/>
            <person name="Dossat C."/>
            <person name="Franck W.L."/>
            <person name="Chang W.-S."/>
            <person name="Saunders E."/>
            <person name="Bruce D."/>
            <person name="Richardson P."/>
            <person name="Normand P."/>
            <person name="Dreyfus B."/>
            <person name="Pignol D."/>
            <person name="Stacey G."/>
            <person name="Emerich D."/>
            <person name="Vermeglio A."/>
            <person name="Medigue C."/>
            <person name="Sadowsky M."/>
        </authorList>
    </citation>
    <scope>NUCLEOTIDE SEQUENCE [LARGE SCALE GENOMIC DNA]</scope>
    <source>
        <strain>ORS 278</strain>
    </source>
</reference>
<sequence>MNAPLERPANSVDPKLLEILVCPMTKGPLEYDAARQELISRSAKLAYPIRDGIPIMLPEEARKID</sequence>
<comment type="similarity">
    <text evidence="1">Belongs to the UPF0434 family.</text>
</comment>
<name>Y313_BRASO</name>
<proteinExistence type="inferred from homology"/>
<evidence type="ECO:0000255" key="1">
    <source>
        <dbReference type="HAMAP-Rule" id="MF_01187"/>
    </source>
</evidence>
<gene>
    <name type="ordered locus">BRADO0313</name>
</gene>
<organism>
    <name type="scientific">Bradyrhizobium sp. (strain ORS 278)</name>
    <dbReference type="NCBI Taxonomy" id="114615"/>
    <lineage>
        <taxon>Bacteria</taxon>
        <taxon>Pseudomonadati</taxon>
        <taxon>Pseudomonadota</taxon>
        <taxon>Alphaproteobacteria</taxon>
        <taxon>Hyphomicrobiales</taxon>
        <taxon>Nitrobacteraceae</taxon>
        <taxon>Bradyrhizobium</taxon>
    </lineage>
</organism>
<feature type="chain" id="PRO_1000138289" description="UPF0434 protein BRADO0313">
    <location>
        <begin position="1"/>
        <end position="65"/>
    </location>
</feature>